<reference key="1">
    <citation type="journal article" date="2003" name="DNA Res.">
        <title>Prediction of the coding sequences of mouse homologues of KIAA gene: II. The complete nucleotide sequences of 400 mouse KIAA-homologous cDNAs identified by screening of terminal sequences of cDNA clones randomly sampled from size-fractionated libraries.</title>
        <authorList>
            <person name="Okazaki N."/>
            <person name="Kikuno R."/>
            <person name="Ohara R."/>
            <person name="Inamoto S."/>
            <person name="Aizawa H."/>
            <person name="Yuasa S."/>
            <person name="Nakajima D."/>
            <person name="Nagase T."/>
            <person name="Ohara O."/>
            <person name="Koga H."/>
        </authorList>
    </citation>
    <scope>NUCLEOTIDE SEQUENCE [LARGE SCALE MRNA] (ISOFORM 2)</scope>
    <source>
        <tissue>Brain</tissue>
    </source>
</reference>
<reference key="2">
    <citation type="journal article" date="2005" name="Science">
        <title>The transcriptional landscape of the mammalian genome.</title>
        <authorList>
            <person name="Carninci P."/>
            <person name="Kasukawa T."/>
            <person name="Katayama S."/>
            <person name="Gough J."/>
            <person name="Frith M.C."/>
            <person name="Maeda N."/>
            <person name="Oyama R."/>
            <person name="Ravasi T."/>
            <person name="Lenhard B."/>
            <person name="Wells C."/>
            <person name="Kodzius R."/>
            <person name="Shimokawa K."/>
            <person name="Bajic V.B."/>
            <person name="Brenner S.E."/>
            <person name="Batalov S."/>
            <person name="Forrest A.R."/>
            <person name="Zavolan M."/>
            <person name="Davis M.J."/>
            <person name="Wilming L.G."/>
            <person name="Aidinis V."/>
            <person name="Allen J.E."/>
            <person name="Ambesi-Impiombato A."/>
            <person name="Apweiler R."/>
            <person name="Aturaliya R.N."/>
            <person name="Bailey T.L."/>
            <person name="Bansal M."/>
            <person name="Baxter L."/>
            <person name="Beisel K.W."/>
            <person name="Bersano T."/>
            <person name="Bono H."/>
            <person name="Chalk A.M."/>
            <person name="Chiu K.P."/>
            <person name="Choudhary V."/>
            <person name="Christoffels A."/>
            <person name="Clutterbuck D.R."/>
            <person name="Crowe M.L."/>
            <person name="Dalla E."/>
            <person name="Dalrymple B.P."/>
            <person name="de Bono B."/>
            <person name="Della Gatta G."/>
            <person name="di Bernardo D."/>
            <person name="Down T."/>
            <person name="Engstrom P."/>
            <person name="Fagiolini M."/>
            <person name="Faulkner G."/>
            <person name="Fletcher C.F."/>
            <person name="Fukushima T."/>
            <person name="Furuno M."/>
            <person name="Futaki S."/>
            <person name="Gariboldi M."/>
            <person name="Georgii-Hemming P."/>
            <person name="Gingeras T.R."/>
            <person name="Gojobori T."/>
            <person name="Green R.E."/>
            <person name="Gustincich S."/>
            <person name="Harbers M."/>
            <person name="Hayashi Y."/>
            <person name="Hensch T.K."/>
            <person name="Hirokawa N."/>
            <person name="Hill D."/>
            <person name="Huminiecki L."/>
            <person name="Iacono M."/>
            <person name="Ikeo K."/>
            <person name="Iwama A."/>
            <person name="Ishikawa T."/>
            <person name="Jakt M."/>
            <person name="Kanapin A."/>
            <person name="Katoh M."/>
            <person name="Kawasawa Y."/>
            <person name="Kelso J."/>
            <person name="Kitamura H."/>
            <person name="Kitano H."/>
            <person name="Kollias G."/>
            <person name="Krishnan S.P."/>
            <person name="Kruger A."/>
            <person name="Kummerfeld S.K."/>
            <person name="Kurochkin I.V."/>
            <person name="Lareau L.F."/>
            <person name="Lazarevic D."/>
            <person name="Lipovich L."/>
            <person name="Liu J."/>
            <person name="Liuni S."/>
            <person name="McWilliam S."/>
            <person name="Madan Babu M."/>
            <person name="Madera M."/>
            <person name="Marchionni L."/>
            <person name="Matsuda H."/>
            <person name="Matsuzawa S."/>
            <person name="Miki H."/>
            <person name="Mignone F."/>
            <person name="Miyake S."/>
            <person name="Morris K."/>
            <person name="Mottagui-Tabar S."/>
            <person name="Mulder N."/>
            <person name="Nakano N."/>
            <person name="Nakauchi H."/>
            <person name="Ng P."/>
            <person name="Nilsson R."/>
            <person name="Nishiguchi S."/>
            <person name="Nishikawa S."/>
            <person name="Nori F."/>
            <person name="Ohara O."/>
            <person name="Okazaki Y."/>
            <person name="Orlando V."/>
            <person name="Pang K.C."/>
            <person name="Pavan W.J."/>
            <person name="Pavesi G."/>
            <person name="Pesole G."/>
            <person name="Petrovsky N."/>
            <person name="Piazza S."/>
            <person name="Reed J."/>
            <person name="Reid J.F."/>
            <person name="Ring B.Z."/>
            <person name="Ringwald M."/>
            <person name="Rost B."/>
            <person name="Ruan Y."/>
            <person name="Salzberg S.L."/>
            <person name="Sandelin A."/>
            <person name="Schneider C."/>
            <person name="Schoenbach C."/>
            <person name="Sekiguchi K."/>
            <person name="Semple C.A."/>
            <person name="Seno S."/>
            <person name="Sessa L."/>
            <person name="Sheng Y."/>
            <person name="Shibata Y."/>
            <person name="Shimada H."/>
            <person name="Shimada K."/>
            <person name="Silva D."/>
            <person name="Sinclair B."/>
            <person name="Sperling S."/>
            <person name="Stupka E."/>
            <person name="Sugiura K."/>
            <person name="Sultana R."/>
            <person name="Takenaka Y."/>
            <person name="Taki K."/>
            <person name="Tammoja K."/>
            <person name="Tan S.L."/>
            <person name="Tang S."/>
            <person name="Taylor M.S."/>
            <person name="Tegner J."/>
            <person name="Teichmann S.A."/>
            <person name="Ueda H.R."/>
            <person name="van Nimwegen E."/>
            <person name="Verardo R."/>
            <person name="Wei C.L."/>
            <person name="Yagi K."/>
            <person name="Yamanishi H."/>
            <person name="Zabarovsky E."/>
            <person name="Zhu S."/>
            <person name="Zimmer A."/>
            <person name="Hide W."/>
            <person name="Bult C."/>
            <person name="Grimmond S.M."/>
            <person name="Teasdale R.D."/>
            <person name="Liu E.T."/>
            <person name="Brusic V."/>
            <person name="Quackenbush J."/>
            <person name="Wahlestedt C."/>
            <person name="Mattick J.S."/>
            <person name="Hume D.A."/>
            <person name="Kai C."/>
            <person name="Sasaki D."/>
            <person name="Tomaru Y."/>
            <person name="Fukuda S."/>
            <person name="Kanamori-Katayama M."/>
            <person name="Suzuki M."/>
            <person name="Aoki J."/>
            <person name="Arakawa T."/>
            <person name="Iida J."/>
            <person name="Imamura K."/>
            <person name="Itoh M."/>
            <person name="Kato T."/>
            <person name="Kawaji H."/>
            <person name="Kawagashira N."/>
            <person name="Kawashima T."/>
            <person name="Kojima M."/>
            <person name="Kondo S."/>
            <person name="Konno H."/>
            <person name="Nakano K."/>
            <person name="Ninomiya N."/>
            <person name="Nishio T."/>
            <person name="Okada M."/>
            <person name="Plessy C."/>
            <person name="Shibata K."/>
            <person name="Shiraki T."/>
            <person name="Suzuki S."/>
            <person name="Tagami M."/>
            <person name="Waki K."/>
            <person name="Watahiki A."/>
            <person name="Okamura-Oho Y."/>
            <person name="Suzuki H."/>
            <person name="Kawai J."/>
            <person name="Hayashizaki Y."/>
        </authorList>
    </citation>
    <scope>NUCLEOTIDE SEQUENCE [LARGE SCALE MRNA] (ISOFORM 4)</scope>
    <source>
        <strain>C57BL/6J</strain>
        <tissue>Olfactory bulb</tissue>
    </source>
</reference>
<reference key="3">
    <citation type="journal article" date="2004" name="Genome Res.">
        <title>The status, quality, and expansion of the NIH full-length cDNA project: the Mammalian Gene Collection (MGC).</title>
        <authorList>
            <consortium name="The MGC Project Team"/>
        </authorList>
    </citation>
    <scope>NUCLEOTIDE SEQUENCE [LARGE SCALE MRNA] (ISOFORM 3)</scope>
    <source>
        <tissue>Embryo</tissue>
    </source>
</reference>
<reference key="4">
    <citation type="journal article" date="2002" name="J. Cell Biol.">
        <title>Cast: a novel protein of the cytomatrix at the active zone of synapses that forms a ternary complex with RIM1 and Munc13-1.</title>
        <authorList>
            <person name="Ohtsuka T."/>
            <person name="Takao-Rikitsu E."/>
            <person name="Inoue E."/>
            <person name="Inoue M."/>
            <person name="Takeuchi M."/>
            <person name="Matsubara K."/>
            <person name="Deguchi-Tawarada M."/>
            <person name="Satoh K."/>
            <person name="Morimoto K."/>
            <person name="Nakanishi H."/>
            <person name="Takai Y."/>
        </authorList>
    </citation>
    <scope>SUBCELLULAR LOCATION</scope>
    <scope>TISSUE SPECIFICITY</scope>
</reference>
<reference key="5">
    <citation type="journal article" date="2010" name="Cell">
        <title>A tissue-specific atlas of mouse protein phosphorylation and expression.</title>
        <authorList>
            <person name="Huttlin E.L."/>
            <person name="Jedrychowski M.P."/>
            <person name="Elias J.E."/>
            <person name="Goswami T."/>
            <person name="Rad R."/>
            <person name="Beausoleil S.A."/>
            <person name="Villen J."/>
            <person name="Haas W."/>
            <person name="Sowa M.E."/>
            <person name="Gygi S.P."/>
        </authorList>
    </citation>
    <scope>PHOSPHORYLATION [LARGE SCALE ANALYSIS] AT SER-65 AND SER-666</scope>
    <scope>IDENTIFICATION BY MASS SPECTROMETRY [LARGE SCALE ANALYSIS]</scope>
    <source>
        <tissue>Brain</tissue>
    </source>
</reference>
<accession>Q6PH08</accession>
<accession>Q80U20</accession>
<accession>Q8CCP1</accession>
<name>ERC2_MOUSE</name>
<protein>
    <recommendedName>
        <fullName>ERC protein 2</fullName>
    </recommendedName>
    <alternativeName>
        <fullName>CAZ-associated structural protein 1</fullName>
        <shortName>CAST1</shortName>
    </alternativeName>
</protein>
<sequence>MYGSARTISNLEGSPSRSPRLPRSPRLGHRRTSSGGGGGTGKTLSMENIQSLNAAYATSGPMYLSDHEGVASTTYPKGTMTLGRATNRAVYGGRVTAMGSSPNIASAGLSHTDVLSYTDQHGGLSGSSHHHHHQVPSMLRQVRDSTMLDLQAQLKELQRENDLLRKELDIKDSKLGSSMNSIKTFWSPELKKERVLRKEEAARMSVLKEQMRVSHEENQHLQLTIQALQDELRTQRDLNHLLQQESGNRGAEHFTIELTEENFRRLQAEHDRQAKELFLLRKTLEEMELRIETQKQTLNARDESIKKLLEMLQSKGLPSKSLEDDNERTRRMAEAESQVSHLEVILDQKEKENIHLREELHRRSQLQPEPAKTKALQTVIEMKDTKIASLERNIRDLEDEVQMLKANGVLNTEDREEEIKQIEVYKSHSKFMKTKIDQLKQELSKKESELLALQTKLETLSNQNSDCKQHIEVLKESLTAKEQRAAILQTEVDALRLRLEEKESFLNKKTKQLQDLTEEKGTLAGEIRDMKDMLEVKERKINVLQKKIENLQEQLRDKDKQLTNLKDRVKSLQTDSSNTDTALATLEEALSEKERIIERLKEQRERDDRERLEEIESFRKENKDLKEKVNALQAELTEKESSLIDLKEHASSLASAGLKRDSKLKSLEIAIEQKKEECNKLEAQLKKAHNIEDDSRMNPEFADRLKQLDKEASYYRDECGKAQAEVDRLLEILKEVENEKNDKDKKIAELESLTLRHMKDQNKKVANLKYNQQLEKKKNAQLLEEVRRREDSMVDNSQHLQIEELMNALEKTRQELDATKARLASTQQSLAEKEAHLANLRIERRKQLEEILEMKQEALLAAISEKDANIALLELSASKKKKTQEEVMALKREKDRLVHQLKQQTQNRMKLMADNYDEDHHHYHHHHHHHHHRSPGRSQHSNHRPSPDQDDEEGIWA</sequence>
<keyword id="KW-0025">Alternative splicing</keyword>
<keyword id="KW-0966">Cell projection</keyword>
<keyword id="KW-0175">Coiled coil</keyword>
<keyword id="KW-0963">Cytoplasm</keyword>
<keyword id="KW-0206">Cytoskeleton</keyword>
<keyword id="KW-0597">Phosphoprotein</keyword>
<keyword id="KW-1185">Reference proteome</keyword>
<keyword id="KW-0770">Synapse</keyword>
<feature type="chain" id="PRO_0000087003" description="ERC protein 2">
    <location>
        <begin position="1"/>
        <end position="957"/>
    </location>
</feature>
<feature type="region of interest" description="Disordered" evidence="2">
    <location>
        <begin position="1"/>
        <end position="44"/>
    </location>
</feature>
<feature type="region of interest" description="Disordered" evidence="2">
    <location>
        <begin position="922"/>
        <end position="957"/>
    </location>
</feature>
<feature type="coiled-coil region" evidence="1">
    <location>
        <begin position="140"/>
        <end position="917"/>
    </location>
</feature>
<feature type="compositionally biased region" description="Polar residues" evidence="2">
    <location>
        <begin position="1"/>
        <end position="13"/>
    </location>
</feature>
<feature type="compositionally biased region" description="Low complexity" evidence="2">
    <location>
        <begin position="14"/>
        <end position="25"/>
    </location>
</feature>
<feature type="compositionally biased region" description="Basic residues" evidence="2">
    <location>
        <begin position="922"/>
        <end position="943"/>
    </location>
</feature>
<feature type="compositionally biased region" description="Acidic residues" evidence="2">
    <location>
        <begin position="948"/>
        <end position="957"/>
    </location>
</feature>
<feature type="modified residue" description="Phosphoserine" evidence="7">
    <location>
        <position position="65"/>
    </location>
</feature>
<feature type="modified residue" description="Phosphoserine" evidence="7">
    <location>
        <position position="666"/>
    </location>
</feature>
<feature type="splice variant" id="VSP_012306" description="In isoform 2." evidence="6">
    <location>
        <begin position="1"/>
        <end position="325"/>
    </location>
</feature>
<feature type="splice variant" id="VSP_011466" description="In isoform 4." evidence="5">
    <original>Q</original>
    <variation>QLLDARRTK</variation>
    <location>
        <position position="219"/>
    </location>
</feature>
<feature type="splice variant" id="VSP_011467" description="In isoform 2." evidence="6">
    <original>NERTRRMAEAESQVSHLEVILDQKEKENIHLRE</original>
    <variation>MALNRSVQTCFCSKMPCEQQICSH</variation>
    <location>
        <begin position="326"/>
        <end position="358"/>
    </location>
</feature>
<feature type="splice variant" id="VSP_011468" description="In isoform 4." evidence="5">
    <original>DALRLRLEEKESFLNKKTKQLQD</original>
    <variation>RHLLRYWRAGALSHIQCCSWETS</variation>
    <location>
        <begin position="493"/>
        <end position="515"/>
    </location>
</feature>
<feature type="splice variant" id="VSP_011471" description="In isoform 4." evidence="5">
    <location>
        <begin position="516"/>
        <end position="957"/>
    </location>
</feature>
<feature type="splice variant" id="VSP_011469" description="In isoform 3." evidence="4">
    <location>
        <begin position="752"/>
        <end position="755"/>
    </location>
</feature>
<feature type="splice variant" id="VSP_011470" description="In isoform 3." evidence="4">
    <original>DDEEGIWA</original>
    <variation>LSEGLDKRIAQHCSSILIIYCSLALLTIHQRRPAVAAGLKGRGVFAFTFLLNSVLLD</variation>
    <location>
        <begin position="950"/>
        <end position="957"/>
    </location>
</feature>
<dbReference type="EMBL" id="AK122265">
    <property type="protein sequence ID" value="BAC65547.1"/>
    <property type="status" value="ALT_INIT"/>
    <property type="molecule type" value="mRNA"/>
</dbReference>
<dbReference type="EMBL" id="AK032385">
    <property type="protein sequence ID" value="BAC27848.1"/>
    <property type="molecule type" value="mRNA"/>
</dbReference>
<dbReference type="EMBL" id="BC056760">
    <property type="protein sequence ID" value="AAH56760.1"/>
    <property type="molecule type" value="mRNA"/>
</dbReference>
<dbReference type="CCDS" id="CCDS26887.1">
    <molecule id="Q6PH08-3"/>
</dbReference>
<dbReference type="RefSeq" id="NP_001391864.1">
    <molecule id="Q6PH08-3"/>
    <property type="nucleotide sequence ID" value="NM_001404935.1"/>
</dbReference>
<dbReference type="RefSeq" id="NP_001391866.1">
    <molecule id="Q6PH08-1"/>
    <property type="nucleotide sequence ID" value="NM_001404937.1"/>
</dbReference>
<dbReference type="RefSeq" id="NP_808482.2">
    <molecule id="Q6PH08-3"/>
    <property type="nucleotide sequence ID" value="NM_177814.5"/>
</dbReference>
<dbReference type="RefSeq" id="XP_006519013.1">
    <molecule id="Q6PH08-2"/>
    <property type="nucleotide sequence ID" value="XM_006518950.5"/>
</dbReference>
<dbReference type="SMR" id="Q6PH08"/>
<dbReference type="BioGRID" id="232032">
    <property type="interactions" value="18"/>
</dbReference>
<dbReference type="FunCoup" id="Q6PH08">
    <property type="interactions" value="467"/>
</dbReference>
<dbReference type="IntAct" id="Q6PH08">
    <property type="interactions" value="5"/>
</dbReference>
<dbReference type="MINT" id="Q6PH08"/>
<dbReference type="STRING" id="10090.ENSMUSP00000087773"/>
<dbReference type="GlyGen" id="Q6PH08">
    <property type="glycosylation" value="2 sites, 1 O-linked glycan (2 sites)"/>
</dbReference>
<dbReference type="iPTMnet" id="Q6PH08"/>
<dbReference type="PhosphoSitePlus" id="Q6PH08"/>
<dbReference type="SwissPalm" id="Q6PH08"/>
<dbReference type="jPOST" id="Q6PH08"/>
<dbReference type="PaxDb" id="10090-ENSMUSP00000087773"/>
<dbReference type="PeptideAtlas" id="Q6PH08"/>
<dbReference type="ProteomicsDB" id="275764">
    <molecule id="Q6PH08-1"/>
</dbReference>
<dbReference type="ProteomicsDB" id="275765">
    <molecule id="Q6PH08-2"/>
</dbReference>
<dbReference type="ProteomicsDB" id="275766">
    <molecule id="Q6PH08-3"/>
</dbReference>
<dbReference type="ProteomicsDB" id="275767">
    <molecule id="Q6PH08-4"/>
</dbReference>
<dbReference type="Pumba" id="Q6PH08"/>
<dbReference type="Antibodypedia" id="46273">
    <property type="antibodies" value="59 antibodies from 21 providers"/>
</dbReference>
<dbReference type="DNASU" id="238988"/>
<dbReference type="Ensembl" id="ENSMUST00000090302.6">
    <molecule id="Q6PH08-3"/>
    <property type="protein sequence ID" value="ENSMUSP00000087773.6"/>
    <property type="gene ID" value="ENSMUSG00000040640.12"/>
</dbReference>
<dbReference type="Ensembl" id="ENSMUST00000210924.2">
    <molecule id="Q6PH08-2"/>
    <property type="protein sequence ID" value="ENSMUSP00000147744.2"/>
    <property type="gene ID" value="ENSMUSG00000040640.12"/>
</dbReference>
<dbReference type="Ensembl" id="ENSMUST00000211145.2">
    <molecule id="Q6PH08-1"/>
    <property type="protein sequence ID" value="ENSMUSP00000147886.2"/>
    <property type="gene ID" value="ENSMUSG00000040640.12"/>
</dbReference>
<dbReference type="GeneID" id="238988"/>
<dbReference type="KEGG" id="mmu:238988"/>
<dbReference type="UCSC" id="uc007sty.1">
    <molecule id="Q6PH08-4"/>
    <property type="organism name" value="mouse"/>
</dbReference>
<dbReference type="UCSC" id="uc007sua.1">
    <molecule id="Q6PH08-3"/>
    <property type="organism name" value="mouse"/>
</dbReference>
<dbReference type="AGR" id="MGI:1098749"/>
<dbReference type="CTD" id="26059"/>
<dbReference type="MGI" id="MGI:1098749">
    <property type="gene designation" value="Erc2"/>
</dbReference>
<dbReference type="VEuPathDB" id="HostDB:ENSMUSG00000040640"/>
<dbReference type="eggNOG" id="KOG4809">
    <property type="taxonomic scope" value="Eukaryota"/>
</dbReference>
<dbReference type="GeneTree" id="ENSGT00650000093320"/>
<dbReference type="HOGENOM" id="CLU_009304_0_0_1"/>
<dbReference type="InParanoid" id="Q6PH08"/>
<dbReference type="OMA" id="EEILEMX"/>
<dbReference type="PhylomeDB" id="Q6PH08"/>
<dbReference type="TreeFam" id="TF324969"/>
<dbReference type="BioGRID-ORCS" id="238988">
    <property type="hits" value="0 hits in 45 CRISPR screens"/>
</dbReference>
<dbReference type="CD-CODE" id="05A797AF">
    <property type="entry name" value="Presynaptic clusters"/>
</dbReference>
<dbReference type="CD-CODE" id="CE726F99">
    <property type="entry name" value="Postsynaptic density"/>
</dbReference>
<dbReference type="ChiTaRS" id="Erc2">
    <property type="organism name" value="mouse"/>
</dbReference>
<dbReference type="PRO" id="PR:Q6PH08"/>
<dbReference type="Proteomes" id="UP000000589">
    <property type="component" value="Chromosome 14"/>
</dbReference>
<dbReference type="RNAct" id="Q6PH08">
    <property type="molecule type" value="protein"/>
</dbReference>
<dbReference type="Bgee" id="ENSMUSG00000040640">
    <property type="expression patterns" value="Expressed in piriform cortex and 178 other cell types or tissues"/>
</dbReference>
<dbReference type="ExpressionAtlas" id="Q6PH08">
    <property type="expression patterns" value="baseline and differential"/>
</dbReference>
<dbReference type="GO" id="GO:0005856">
    <property type="term" value="C:cytoskeleton"/>
    <property type="evidence" value="ECO:0007669"/>
    <property type="project" value="UniProtKB-SubCell"/>
</dbReference>
<dbReference type="GO" id="GO:0098982">
    <property type="term" value="C:GABA-ergic synapse"/>
    <property type="evidence" value="ECO:0000314"/>
    <property type="project" value="SynGO"/>
</dbReference>
<dbReference type="GO" id="GO:0098978">
    <property type="term" value="C:glutamatergic synapse"/>
    <property type="evidence" value="ECO:0000314"/>
    <property type="project" value="SynGO"/>
</dbReference>
<dbReference type="GO" id="GO:0030426">
    <property type="term" value="C:growth cone"/>
    <property type="evidence" value="ECO:0000250"/>
    <property type="project" value="UniProtKB"/>
</dbReference>
<dbReference type="GO" id="GO:0098831">
    <property type="term" value="C:presynaptic active zone cytoplasmic component"/>
    <property type="evidence" value="ECO:0000314"/>
    <property type="project" value="SynGO"/>
</dbReference>
<dbReference type="GO" id="GO:0042734">
    <property type="term" value="C:presynaptic membrane"/>
    <property type="evidence" value="ECO:0000250"/>
    <property type="project" value="UniProtKB"/>
</dbReference>
<dbReference type="GO" id="GO:0045202">
    <property type="term" value="C:synapse"/>
    <property type="evidence" value="ECO:0000314"/>
    <property type="project" value="MGI"/>
</dbReference>
<dbReference type="GO" id="GO:0098882">
    <property type="term" value="F:structural constituent of presynaptic active zone"/>
    <property type="evidence" value="ECO:0000314"/>
    <property type="project" value="SynGO"/>
</dbReference>
<dbReference type="GO" id="GO:0150037">
    <property type="term" value="P:regulation of calcium-dependent activation of synaptic vesicle fusion"/>
    <property type="evidence" value="ECO:0000314"/>
    <property type="project" value="SynGO"/>
</dbReference>
<dbReference type="GO" id="GO:0099509">
    <property type="term" value="P:regulation of presynaptic cytosolic calcium ion concentration"/>
    <property type="evidence" value="ECO:0000314"/>
    <property type="project" value="SynGO"/>
</dbReference>
<dbReference type="GO" id="GO:0016082">
    <property type="term" value="P:synaptic vesicle priming"/>
    <property type="evidence" value="ECO:0000314"/>
    <property type="project" value="SynGO"/>
</dbReference>
<dbReference type="Gene3D" id="1.10.287.1490">
    <property type="match status" value="1"/>
</dbReference>
<dbReference type="InterPro" id="IPR019323">
    <property type="entry name" value="ELKS/CAST"/>
</dbReference>
<dbReference type="PANTHER" id="PTHR18861">
    <property type="entry name" value="ELKS/RAB6-INTERACTING/CAST PROTEIN"/>
    <property type="match status" value="1"/>
</dbReference>
<dbReference type="PANTHER" id="PTHR18861:SF3">
    <property type="entry name" value="ERC PROTEIN 2"/>
    <property type="match status" value="1"/>
</dbReference>
<dbReference type="Pfam" id="PF10174">
    <property type="entry name" value="Cast"/>
    <property type="match status" value="1"/>
</dbReference>
<dbReference type="SUPFAM" id="SSF57997">
    <property type="entry name" value="Tropomyosin"/>
    <property type="match status" value="1"/>
</dbReference>
<proteinExistence type="evidence at protein level"/>
<gene>
    <name type="primary">Erc2</name>
    <name type="synonym">Cast1</name>
    <name type="synonym">D14Ertd171e</name>
    <name type="synonym">Kiaa0378</name>
</gene>
<organism>
    <name type="scientific">Mus musculus</name>
    <name type="common">Mouse</name>
    <dbReference type="NCBI Taxonomy" id="10090"/>
    <lineage>
        <taxon>Eukaryota</taxon>
        <taxon>Metazoa</taxon>
        <taxon>Chordata</taxon>
        <taxon>Craniata</taxon>
        <taxon>Vertebrata</taxon>
        <taxon>Euteleostomi</taxon>
        <taxon>Mammalia</taxon>
        <taxon>Eutheria</taxon>
        <taxon>Euarchontoglires</taxon>
        <taxon>Glires</taxon>
        <taxon>Rodentia</taxon>
        <taxon>Myomorpha</taxon>
        <taxon>Muroidea</taxon>
        <taxon>Muridae</taxon>
        <taxon>Murinae</taxon>
        <taxon>Mus</taxon>
        <taxon>Mus</taxon>
    </lineage>
</organism>
<comment type="function">
    <text>Thought to be involved in the organization of the cytomatrix at the nerve terminals active zone (CAZ) which regulates neurotransmitter release. Seems to act together with BSN. May recruit liprin-alpha proteins to the CAZ.</text>
</comment>
<comment type="subunit">
    <text>Interacts with BSN, ERC1, PPFIA1, PPFIA2, PPFIA3 and PPFIA4. Interacts through its C-terminus with the PDZ domain of RIMS1. Part of a complex consisting of ERC2, RIMS1 and UNC13A.</text>
</comment>
<comment type="subcellular location">
    <subcellularLocation>
        <location evidence="3">Cytoplasm</location>
    </subcellularLocation>
    <subcellularLocation>
        <location evidence="3">Synapse</location>
    </subcellularLocation>
    <subcellularLocation>
        <location evidence="3">Presynaptic active zone</location>
    </subcellularLocation>
    <subcellularLocation>
        <location evidence="3">Cytoplasm</location>
        <location evidence="3">Cytoskeleton</location>
    </subcellularLocation>
    <text>Localized to the active zone of presynaptic density.</text>
</comment>
<comment type="alternative products">
    <event type="alternative splicing"/>
    <isoform>
        <id>Q6PH08-1</id>
        <name>1</name>
        <sequence type="displayed"/>
    </isoform>
    <isoform>
        <id>Q6PH08-2</id>
        <name>2</name>
        <sequence type="described" ref="VSP_012306 VSP_011467"/>
    </isoform>
    <isoform>
        <id>Q6PH08-3</id>
        <name>3</name>
        <sequence type="described" ref="VSP_011469 VSP_011470"/>
    </isoform>
    <isoform>
        <id>Q6PH08-4</id>
        <name>4</name>
        <sequence type="described" ref="VSP_011466 VSP_011468 VSP_011471"/>
    </isoform>
</comment>
<comment type="tissue specificity">
    <text evidence="3">Expressed throughout the central nervous system, including hippocampus, cortex, cerebellum and olfactory bulb.</text>
</comment>
<comment type="miscellaneous">
    <molecule>Isoform 4</molecule>
    <text evidence="6">Due to intron retention.</text>
</comment>
<comment type="sequence caution" evidence="6">
    <conflict type="erroneous initiation">
        <sequence resource="EMBL-CDS" id="BAC65547"/>
    </conflict>
    <text>Extended N-terminus.</text>
</comment>
<evidence type="ECO:0000255" key="1"/>
<evidence type="ECO:0000256" key="2">
    <source>
        <dbReference type="SAM" id="MobiDB-lite"/>
    </source>
</evidence>
<evidence type="ECO:0000269" key="3">
    <source>
    </source>
</evidence>
<evidence type="ECO:0000303" key="4">
    <source>
    </source>
</evidence>
<evidence type="ECO:0000303" key="5">
    <source>
    </source>
</evidence>
<evidence type="ECO:0000305" key="6"/>
<evidence type="ECO:0007744" key="7">
    <source>
    </source>
</evidence>